<sequence>MTKDLLLELGLEELPAYVVTPSEKQLGQKMVKFLEDHRLSFETVQTFSTPRRLAVRVKGLADQQTDLTEDFKGPSKKIALDAEGNFSKAAQGFVRGKGLSVDDIEFREVKGEEYVYVTKHETGKSAIDVLASVTEVLTELTFPVNMHWANNSFEYIRPVHTLVVLLDDQALELDFLDIHSGRISRGHRFLGSDTEISSASSYEDDLRQQFVIADAKERQQMIVNQIHAIEEKKNISVEIDEDLLNEVLNLVEYPTAFLGSFDEKYLDVPEEVLVTSMKNHQRYFVVRDRDGKLLPNFISVRNGNAEHIENVIKGNEKVLVARLEDGEFFWQEDQKLNIADLVEKLKQVTFHEKIGSLYEHMDRVKVISQYLAEKADLSDEEKLAVLRAASIYKFDLLTGMVDEFDELQGIMGEKYALLAGEQPAVAAAIREHYMPTSADGELPETRVGAILALADKFDTLLSFFSVGLIPSGSNDPYALRRATQGIVRILEAFGWDIPLDELVTNLYGLSFASLDYANQKEVMAFISARIEKMIGSKVPKDIREAVLESDTYIVSLILEASQALVQKSKDAQYKVSVESLSRAFNLAEKVTHSVLVDSSLFENNQEKALYQAILSLELTEDMHDNLDKLFALSPIINDFFDNTMVMTDDEKMKQNRLALLNSLVAKARTVAAFNLLNTK</sequence>
<organism>
    <name type="scientific">Streptococcus agalactiae serotype Ia (strain ATCC 27591 / A909 / CDC SS700)</name>
    <dbReference type="NCBI Taxonomy" id="205921"/>
    <lineage>
        <taxon>Bacteria</taxon>
        <taxon>Bacillati</taxon>
        <taxon>Bacillota</taxon>
        <taxon>Bacilli</taxon>
        <taxon>Lactobacillales</taxon>
        <taxon>Streptococcaceae</taxon>
        <taxon>Streptococcus</taxon>
    </lineage>
</organism>
<dbReference type="EC" id="6.1.1.14" evidence="1"/>
<dbReference type="EMBL" id="CP000114">
    <property type="protein sequence ID" value="ABA44827.1"/>
    <property type="molecule type" value="Genomic_DNA"/>
</dbReference>
<dbReference type="RefSeq" id="WP_000159101.1">
    <property type="nucleotide sequence ID" value="NC_007432.1"/>
</dbReference>
<dbReference type="SMR" id="Q3K3A9"/>
<dbReference type="KEGG" id="sak:SAK_0342"/>
<dbReference type="HOGENOM" id="CLU_007220_2_2_9"/>
<dbReference type="GO" id="GO:0005829">
    <property type="term" value="C:cytosol"/>
    <property type="evidence" value="ECO:0007669"/>
    <property type="project" value="TreeGrafter"/>
</dbReference>
<dbReference type="GO" id="GO:0004814">
    <property type="term" value="F:arginine-tRNA ligase activity"/>
    <property type="evidence" value="ECO:0007669"/>
    <property type="project" value="InterPro"/>
</dbReference>
<dbReference type="GO" id="GO:0005524">
    <property type="term" value="F:ATP binding"/>
    <property type="evidence" value="ECO:0007669"/>
    <property type="project" value="UniProtKB-UniRule"/>
</dbReference>
<dbReference type="GO" id="GO:0004820">
    <property type="term" value="F:glycine-tRNA ligase activity"/>
    <property type="evidence" value="ECO:0007669"/>
    <property type="project" value="UniProtKB-UniRule"/>
</dbReference>
<dbReference type="GO" id="GO:0006420">
    <property type="term" value="P:arginyl-tRNA aminoacylation"/>
    <property type="evidence" value="ECO:0007669"/>
    <property type="project" value="InterPro"/>
</dbReference>
<dbReference type="GO" id="GO:0006426">
    <property type="term" value="P:glycyl-tRNA aminoacylation"/>
    <property type="evidence" value="ECO:0007669"/>
    <property type="project" value="UniProtKB-UniRule"/>
</dbReference>
<dbReference type="HAMAP" id="MF_00255">
    <property type="entry name" value="Gly_tRNA_synth_beta"/>
    <property type="match status" value="1"/>
</dbReference>
<dbReference type="InterPro" id="IPR008909">
    <property type="entry name" value="DALR_anticod-bd"/>
</dbReference>
<dbReference type="InterPro" id="IPR015944">
    <property type="entry name" value="Gly-tRNA-synth_bsu"/>
</dbReference>
<dbReference type="InterPro" id="IPR006194">
    <property type="entry name" value="Gly-tRNA-synth_heterodimer"/>
</dbReference>
<dbReference type="NCBIfam" id="TIGR00211">
    <property type="entry name" value="glyS"/>
    <property type="match status" value="1"/>
</dbReference>
<dbReference type="PANTHER" id="PTHR30075:SF2">
    <property type="entry name" value="GLYCINE--TRNA LIGASE, CHLOROPLASTIC_MITOCHONDRIAL 2"/>
    <property type="match status" value="1"/>
</dbReference>
<dbReference type="PANTHER" id="PTHR30075">
    <property type="entry name" value="GLYCYL-TRNA SYNTHETASE"/>
    <property type="match status" value="1"/>
</dbReference>
<dbReference type="Pfam" id="PF05746">
    <property type="entry name" value="DALR_1"/>
    <property type="match status" value="1"/>
</dbReference>
<dbReference type="Pfam" id="PF02092">
    <property type="entry name" value="tRNA_synt_2f"/>
    <property type="match status" value="1"/>
</dbReference>
<dbReference type="PRINTS" id="PR01045">
    <property type="entry name" value="TRNASYNTHGB"/>
</dbReference>
<dbReference type="SUPFAM" id="SSF109604">
    <property type="entry name" value="HD-domain/PDEase-like"/>
    <property type="match status" value="1"/>
</dbReference>
<dbReference type="PROSITE" id="PS50861">
    <property type="entry name" value="AA_TRNA_LIGASE_II_GLYAB"/>
    <property type="match status" value="1"/>
</dbReference>
<protein>
    <recommendedName>
        <fullName evidence="1">Glycine--tRNA ligase beta subunit</fullName>
        <ecNumber evidence="1">6.1.1.14</ecNumber>
    </recommendedName>
    <alternativeName>
        <fullName evidence="1">Glycyl-tRNA synthetase beta subunit</fullName>
        <shortName evidence="1">GlyRS</shortName>
    </alternativeName>
</protein>
<proteinExistence type="inferred from homology"/>
<reference key="1">
    <citation type="journal article" date="2005" name="Proc. Natl. Acad. Sci. U.S.A.">
        <title>Genome analysis of multiple pathogenic isolates of Streptococcus agalactiae: implications for the microbial 'pan-genome'.</title>
        <authorList>
            <person name="Tettelin H."/>
            <person name="Masignani V."/>
            <person name="Cieslewicz M.J."/>
            <person name="Donati C."/>
            <person name="Medini D."/>
            <person name="Ward N.L."/>
            <person name="Angiuoli S.V."/>
            <person name="Crabtree J."/>
            <person name="Jones A.L."/>
            <person name="Durkin A.S."/>
            <person name="DeBoy R.T."/>
            <person name="Davidsen T.M."/>
            <person name="Mora M."/>
            <person name="Scarselli M."/>
            <person name="Margarit y Ros I."/>
            <person name="Peterson J.D."/>
            <person name="Hauser C.R."/>
            <person name="Sundaram J.P."/>
            <person name="Nelson W.C."/>
            <person name="Madupu R."/>
            <person name="Brinkac L.M."/>
            <person name="Dodson R.J."/>
            <person name="Rosovitz M.J."/>
            <person name="Sullivan S.A."/>
            <person name="Daugherty S.C."/>
            <person name="Haft D.H."/>
            <person name="Selengut J."/>
            <person name="Gwinn M.L."/>
            <person name="Zhou L."/>
            <person name="Zafar N."/>
            <person name="Khouri H."/>
            <person name="Radune D."/>
            <person name="Dimitrov G."/>
            <person name="Watkins K."/>
            <person name="O'Connor K.J."/>
            <person name="Smith S."/>
            <person name="Utterback T.R."/>
            <person name="White O."/>
            <person name="Rubens C.E."/>
            <person name="Grandi G."/>
            <person name="Madoff L.C."/>
            <person name="Kasper D.L."/>
            <person name="Telford J.L."/>
            <person name="Wessels M.R."/>
            <person name="Rappuoli R."/>
            <person name="Fraser C.M."/>
        </authorList>
    </citation>
    <scope>NUCLEOTIDE SEQUENCE [LARGE SCALE GENOMIC DNA]</scope>
    <source>
        <strain>ATCC 27591 / A909 / CDC SS700</strain>
    </source>
</reference>
<accession>Q3K3A9</accession>
<evidence type="ECO:0000255" key="1">
    <source>
        <dbReference type="HAMAP-Rule" id="MF_00255"/>
    </source>
</evidence>
<feature type="chain" id="PRO_1000101343" description="Glycine--tRNA ligase beta subunit">
    <location>
        <begin position="1"/>
        <end position="679"/>
    </location>
</feature>
<gene>
    <name evidence="1" type="primary">glyS</name>
    <name type="ordered locus">SAK_0342</name>
</gene>
<name>SYGB_STRA1</name>
<comment type="catalytic activity">
    <reaction evidence="1">
        <text>tRNA(Gly) + glycine + ATP = glycyl-tRNA(Gly) + AMP + diphosphate</text>
        <dbReference type="Rhea" id="RHEA:16013"/>
        <dbReference type="Rhea" id="RHEA-COMP:9664"/>
        <dbReference type="Rhea" id="RHEA-COMP:9683"/>
        <dbReference type="ChEBI" id="CHEBI:30616"/>
        <dbReference type="ChEBI" id="CHEBI:33019"/>
        <dbReference type="ChEBI" id="CHEBI:57305"/>
        <dbReference type="ChEBI" id="CHEBI:78442"/>
        <dbReference type="ChEBI" id="CHEBI:78522"/>
        <dbReference type="ChEBI" id="CHEBI:456215"/>
        <dbReference type="EC" id="6.1.1.14"/>
    </reaction>
</comment>
<comment type="subunit">
    <text evidence="1">Tetramer of two alpha and two beta subunits.</text>
</comment>
<comment type="subcellular location">
    <subcellularLocation>
        <location evidence="1">Cytoplasm</location>
    </subcellularLocation>
</comment>
<comment type="similarity">
    <text evidence="1">Belongs to the class-II aminoacyl-tRNA synthetase family.</text>
</comment>
<keyword id="KW-0030">Aminoacyl-tRNA synthetase</keyword>
<keyword id="KW-0067">ATP-binding</keyword>
<keyword id="KW-0963">Cytoplasm</keyword>
<keyword id="KW-0436">Ligase</keyword>
<keyword id="KW-0547">Nucleotide-binding</keyword>
<keyword id="KW-0648">Protein biosynthesis</keyword>